<evidence type="ECO:0000255" key="1">
    <source>
        <dbReference type="HAMAP-Rule" id="MF_00636"/>
    </source>
</evidence>
<organism>
    <name type="scientific">Mycobacterium sp. (strain KMS)</name>
    <dbReference type="NCBI Taxonomy" id="189918"/>
    <lineage>
        <taxon>Bacteria</taxon>
        <taxon>Bacillati</taxon>
        <taxon>Actinomycetota</taxon>
        <taxon>Actinomycetes</taxon>
        <taxon>Mycobacteriales</taxon>
        <taxon>Mycobacteriaceae</taxon>
        <taxon>Mycobacterium</taxon>
    </lineage>
</organism>
<gene>
    <name type="ordered locus">Mkms_2443</name>
</gene>
<dbReference type="EMBL" id="CP000518">
    <property type="protein sequence ID" value="ABL91641.1"/>
    <property type="molecule type" value="Genomic_DNA"/>
</dbReference>
<dbReference type="SMR" id="A1UFN3"/>
<dbReference type="STRING" id="189918.Mkms_2443"/>
<dbReference type="KEGG" id="mkm:Mkms_2443"/>
<dbReference type="HOGENOM" id="CLU_059558_0_0_11"/>
<dbReference type="OrthoDB" id="9784461at2"/>
<dbReference type="GO" id="GO:0005524">
    <property type="term" value="F:ATP binding"/>
    <property type="evidence" value="ECO:0007669"/>
    <property type="project" value="UniProtKB-UniRule"/>
</dbReference>
<dbReference type="GO" id="GO:0005525">
    <property type="term" value="F:GTP binding"/>
    <property type="evidence" value="ECO:0007669"/>
    <property type="project" value="UniProtKB-UniRule"/>
</dbReference>
<dbReference type="Gene3D" id="3.40.50.300">
    <property type="entry name" value="P-loop containing nucleotide triphosphate hydrolases"/>
    <property type="match status" value="1"/>
</dbReference>
<dbReference type="HAMAP" id="MF_00636">
    <property type="entry name" value="RapZ_like"/>
    <property type="match status" value="1"/>
</dbReference>
<dbReference type="InterPro" id="IPR027417">
    <property type="entry name" value="P-loop_NTPase"/>
</dbReference>
<dbReference type="InterPro" id="IPR005337">
    <property type="entry name" value="RapZ-like"/>
</dbReference>
<dbReference type="InterPro" id="IPR053930">
    <property type="entry name" value="RapZ-like_N"/>
</dbReference>
<dbReference type="InterPro" id="IPR053931">
    <property type="entry name" value="RapZ_C"/>
</dbReference>
<dbReference type="NCBIfam" id="NF003828">
    <property type="entry name" value="PRK05416.1"/>
    <property type="match status" value="1"/>
</dbReference>
<dbReference type="PANTHER" id="PTHR30448">
    <property type="entry name" value="RNASE ADAPTER PROTEIN RAPZ"/>
    <property type="match status" value="1"/>
</dbReference>
<dbReference type="PANTHER" id="PTHR30448:SF0">
    <property type="entry name" value="RNASE ADAPTER PROTEIN RAPZ"/>
    <property type="match status" value="1"/>
</dbReference>
<dbReference type="Pfam" id="PF22740">
    <property type="entry name" value="PapZ_C"/>
    <property type="match status" value="1"/>
</dbReference>
<dbReference type="Pfam" id="PF03668">
    <property type="entry name" value="RapZ-like_N"/>
    <property type="match status" value="1"/>
</dbReference>
<dbReference type="PIRSF" id="PIRSF005052">
    <property type="entry name" value="P-loopkin"/>
    <property type="match status" value="1"/>
</dbReference>
<dbReference type="SUPFAM" id="SSF52540">
    <property type="entry name" value="P-loop containing nucleoside triphosphate hydrolases"/>
    <property type="match status" value="1"/>
</dbReference>
<reference key="1">
    <citation type="submission" date="2006-12" db="EMBL/GenBank/DDBJ databases">
        <title>Complete sequence of chromosome of Mycobacterium sp. KMS.</title>
        <authorList>
            <consortium name="US DOE Joint Genome Institute"/>
            <person name="Copeland A."/>
            <person name="Lucas S."/>
            <person name="Lapidus A."/>
            <person name="Barry K."/>
            <person name="Detter J.C."/>
            <person name="Glavina del Rio T."/>
            <person name="Hammon N."/>
            <person name="Israni S."/>
            <person name="Dalin E."/>
            <person name="Tice H."/>
            <person name="Pitluck S."/>
            <person name="Kiss H."/>
            <person name="Brettin T."/>
            <person name="Bruce D."/>
            <person name="Han C."/>
            <person name="Tapia R."/>
            <person name="Gilna P."/>
            <person name="Schmutz J."/>
            <person name="Larimer F."/>
            <person name="Land M."/>
            <person name="Hauser L."/>
            <person name="Kyrpides N."/>
            <person name="Mikhailova N."/>
            <person name="Miller C.D."/>
            <person name="Richardson P."/>
        </authorList>
    </citation>
    <scope>NUCLEOTIDE SEQUENCE [LARGE SCALE GENOMIC DNA]</scope>
    <source>
        <strain>KMS</strain>
    </source>
</reference>
<keyword id="KW-0067">ATP-binding</keyword>
<keyword id="KW-0342">GTP-binding</keyword>
<keyword id="KW-0547">Nucleotide-binding</keyword>
<proteinExistence type="inferred from homology"/>
<comment type="function">
    <text evidence="1">Displays ATPase and GTPase activities.</text>
</comment>
<comment type="similarity">
    <text evidence="1">Belongs to the RapZ-like family.</text>
</comment>
<name>Y2443_MYCSK</name>
<protein>
    <recommendedName>
        <fullName evidence="1">Nucleotide-binding protein Mkms_2443</fullName>
    </recommendedName>
</protein>
<feature type="chain" id="PRO_0000383269" description="Nucleotide-binding protein Mkms_2443">
    <location>
        <begin position="1"/>
        <end position="305"/>
    </location>
</feature>
<feature type="binding site" evidence="1">
    <location>
        <begin position="28"/>
        <end position="35"/>
    </location>
    <ligand>
        <name>ATP</name>
        <dbReference type="ChEBI" id="CHEBI:30616"/>
    </ligand>
</feature>
<feature type="binding site" evidence="1">
    <location>
        <begin position="79"/>
        <end position="82"/>
    </location>
    <ligand>
        <name>GTP</name>
        <dbReference type="ChEBI" id="CHEBI:37565"/>
    </ligand>
</feature>
<accession>A1UFN3</accession>
<sequence>MTESDMSEQLRGDVDHPESGIDVVLVTGLSGAGRGTAAKVLEDLGWYVADNLPPELIARMVELGLAAGSRITQLAVVMDVRSRGFTGDLDWVRRDLATRNITPRVLFLEASDDILVRRYEQNRRSHPLQGDQTLAEGIARERALLAPVRASADLVIDTSKLSVHALRESVERAFGGEVVAETSATVESFGYKYGLPMDADIVMDVRFLPNPHWVDALRPHTGQHPDVRDYVLGQPGAEEFLDTYHRLLNVVIDGYRREGKRYMTVAIGCTGGKHRSVAIAEALAGRLQGGDELTVRVLHRDLGRE</sequence>